<reference key="1">
    <citation type="journal article" date="2006" name="Proc. Natl. Acad. Sci. U.S.A.">
        <title>Comparative genomics of the lactic acid bacteria.</title>
        <authorList>
            <person name="Makarova K.S."/>
            <person name="Slesarev A."/>
            <person name="Wolf Y.I."/>
            <person name="Sorokin A."/>
            <person name="Mirkin B."/>
            <person name="Koonin E.V."/>
            <person name="Pavlov A."/>
            <person name="Pavlova N."/>
            <person name="Karamychev V."/>
            <person name="Polouchine N."/>
            <person name="Shakhova V."/>
            <person name="Grigoriev I."/>
            <person name="Lou Y."/>
            <person name="Rohksar D."/>
            <person name="Lucas S."/>
            <person name="Huang K."/>
            <person name="Goodstein D.M."/>
            <person name="Hawkins T."/>
            <person name="Plengvidhya V."/>
            <person name="Welker D."/>
            <person name="Hughes J."/>
            <person name="Goh Y."/>
            <person name="Benson A."/>
            <person name="Baldwin K."/>
            <person name="Lee J.-H."/>
            <person name="Diaz-Muniz I."/>
            <person name="Dosti B."/>
            <person name="Smeianov V."/>
            <person name="Wechter W."/>
            <person name="Barabote R."/>
            <person name="Lorca G."/>
            <person name="Altermann E."/>
            <person name="Barrangou R."/>
            <person name="Ganesan B."/>
            <person name="Xie Y."/>
            <person name="Rawsthorne H."/>
            <person name="Tamir D."/>
            <person name="Parker C."/>
            <person name="Breidt F."/>
            <person name="Broadbent J.R."/>
            <person name="Hutkins R."/>
            <person name="O'Sullivan D."/>
            <person name="Steele J."/>
            <person name="Unlu G."/>
            <person name="Saier M.H. Jr."/>
            <person name="Klaenhammer T."/>
            <person name="Richardson P."/>
            <person name="Kozyavkin S."/>
            <person name="Weimer B.C."/>
            <person name="Mills D.A."/>
        </authorList>
    </citation>
    <scope>NUCLEOTIDE SEQUENCE [LARGE SCALE GENOMIC DNA]</scope>
    <source>
        <strain>ATCC BAA-491 / LMD-9</strain>
    </source>
</reference>
<reference key="2">
    <citation type="journal article" date="2014" name="Nucleic Acids Res.">
        <title>Phylogeny of Cas9 determines functional exchangeability of dual-RNA and Cas9 among orthologous type II CRISPR-Cas systems.</title>
        <authorList>
            <person name="Fonfara I."/>
            <person name="Le Rhun A."/>
            <person name="Chylinski K."/>
            <person name="Makarova K.S."/>
            <person name="Lecrivain A.L."/>
            <person name="Bzdrenga J."/>
            <person name="Koonin E.V."/>
            <person name="Charpentier E."/>
        </authorList>
    </citation>
    <scope>FUNCTION</scope>
</reference>
<organism>
    <name type="scientific">Streptococcus thermophilus (strain ATCC BAA-491 / LMD-9)</name>
    <dbReference type="NCBI Taxonomy" id="322159"/>
    <lineage>
        <taxon>Bacteria</taxon>
        <taxon>Bacillati</taxon>
        <taxon>Bacillota</taxon>
        <taxon>Bacilli</taxon>
        <taxon>Lactobacillales</taxon>
        <taxon>Streptococcaceae</taxon>
        <taxon>Streptococcus</taxon>
    </lineage>
</organism>
<dbReference type="EC" id="3.1.26.3" evidence="2"/>
<dbReference type="EMBL" id="CP000419">
    <property type="protein sequence ID" value="ABJ66455.1"/>
    <property type="molecule type" value="Genomic_DNA"/>
</dbReference>
<dbReference type="RefSeq" id="WP_011681316.1">
    <property type="nucleotide sequence ID" value="NC_008532.1"/>
</dbReference>
<dbReference type="SMR" id="Q03K17"/>
<dbReference type="KEGG" id="ste:STER_1272"/>
<dbReference type="HOGENOM" id="CLU_000907_1_3_9"/>
<dbReference type="GO" id="GO:0005737">
    <property type="term" value="C:cytoplasm"/>
    <property type="evidence" value="ECO:0007669"/>
    <property type="project" value="UniProtKB-SubCell"/>
</dbReference>
<dbReference type="GO" id="GO:0003725">
    <property type="term" value="F:double-stranded RNA binding"/>
    <property type="evidence" value="ECO:0007669"/>
    <property type="project" value="TreeGrafter"/>
</dbReference>
<dbReference type="GO" id="GO:0046872">
    <property type="term" value="F:metal ion binding"/>
    <property type="evidence" value="ECO:0007669"/>
    <property type="project" value="UniProtKB-KW"/>
</dbReference>
<dbReference type="GO" id="GO:0004525">
    <property type="term" value="F:ribonuclease III activity"/>
    <property type="evidence" value="ECO:0007669"/>
    <property type="project" value="UniProtKB-UniRule"/>
</dbReference>
<dbReference type="GO" id="GO:0019843">
    <property type="term" value="F:rRNA binding"/>
    <property type="evidence" value="ECO:0007669"/>
    <property type="project" value="UniProtKB-KW"/>
</dbReference>
<dbReference type="GO" id="GO:0006397">
    <property type="term" value="P:mRNA processing"/>
    <property type="evidence" value="ECO:0007669"/>
    <property type="project" value="UniProtKB-UniRule"/>
</dbReference>
<dbReference type="GO" id="GO:0010468">
    <property type="term" value="P:regulation of gene expression"/>
    <property type="evidence" value="ECO:0007669"/>
    <property type="project" value="TreeGrafter"/>
</dbReference>
<dbReference type="GO" id="GO:0006364">
    <property type="term" value="P:rRNA processing"/>
    <property type="evidence" value="ECO:0007669"/>
    <property type="project" value="UniProtKB-UniRule"/>
</dbReference>
<dbReference type="GO" id="GO:0008033">
    <property type="term" value="P:tRNA processing"/>
    <property type="evidence" value="ECO:0007669"/>
    <property type="project" value="UniProtKB-KW"/>
</dbReference>
<dbReference type="CDD" id="cd10845">
    <property type="entry name" value="DSRM_RNAse_III_family"/>
    <property type="match status" value="1"/>
</dbReference>
<dbReference type="CDD" id="cd00593">
    <property type="entry name" value="RIBOc"/>
    <property type="match status" value="1"/>
</dbReference>
<dbReference type="FunFam" id="1.10.1520.10:FF:000001">
    <property type="entry name" value="Ribonuclease 3"/>
    <property type="match status" value="1"/>
</dbReference>
<dbReference type="FunFam" id="3.30.160.20:FF:000003">
    <property type="entry name" value="Ribonuclease 3"/>
    <property type="match status" value="1"/>
</dbReference>
<dbReference type="Gene3D" id="3.30.160.20">
    <property type="match status" value="1"/>
</dbReference>
<dbReference type="Gene3D" id="1.10.1520.10">
    <property type="entry name" value="Ribonuclease III domain"/>
    <property type="match status" value="1"/>
</dbReference>
<dbReference type="HAMAP" id="MF_00104">
    <property type="entry name" value="RNase_III"/>
    <property type="match status" value="1"/>
</dbReference>
<dbReference type="InterPro" id="IPR014720">
    <property type="entry name" value="dsRBD_dom"/>
</dbReference>
<dbReference type="InterPro" id="IPR011907">
    <property type="entry name" value="RNase_III"/>
</dbReference>
<dbReference type="InterPro" id="IPR000999">
    <property type="entry name" value="RNase_III_dom"/>
</dbReference>
<dbReference type="InterPro" id="IPR036389">
    <property type="entry name" value="RNase_III_sf"/>
</dbReference>
<dbReference type="NCBIfam" id="TIGR02191">
    <property type="entry name" value="RNaseIII"/>
    <property type="match status" value="1"/>
</dbReference>
<dbReference type="PANTHER" id="PTHR11207:SF0">
    <property type="entry name" value="RIBONUCLEASE 3"/>
    <property type="match status" value="1"/>
</dbReference>
<dbReference type="PANTHER" id="PTHR11207">
    <property type="entry name" value="RIBONUCLEASE III"/>
    <property type="match status" value="1"/>
</dbReference>
<dbReference type="Pfam" id="PF00035">
    <property type="entry name" value="dsrm"/>
    <property type="match status" value="1"/>
</dbReference>
<dbReference type="Pfam" id="PF14622">
    <property type="entry name" value="Ribonucleas_3_3"/>
    <property type="match status" value="1"/>
</dbReference>
<dbReference type="SMART" id="SM00358">
    <property type="entry name" value="DSRM"/>
    <property type="match status" value="1"/>
</dbReference>
<dbReference type="SMART" id="SM00535">
    <property type="entry name" value="RIBOc"/>
    <property type="match status" value="1"/>
</dbReference>
<dbReference type="SUPFAM" id="SSF54768">
    <property type="entry name" value="dsRNA-binding domain-like"/>
    <property type="match status" value="1"/>
</dbReference>
<dbReference type="SUPFAM" id="SSF69065">
    <property type="entry name" value="RNase III domain-like"/>
    <property type="match status" value="1"/>
</dbReference>
<dbReference type="PROSITE" id="PS50137">
    <property type="entry name" value="DS_RBD"/>
    <property type="match status" value="1"/>
</dbReference>
<dbReference type="PROSITE" id="PS00517">
    <property type="entry name" value="RNASE_3_1"/>
    <property type="match status" value="1"/>
</dbReference>
<dbReference type="PROSITE" id="PS50142">
    <property type="entry name" value="RNASE_3_2"/>
    <property type="match status" value="1"/>
</dbReference>
<name>RNC_STRTD</name>
<evidence type="ECO:0000250" key="1"/>
<evidence type="ECO:0000255" key="2">
    <source>
        <dbReference type="HAMAP-Rule" id="MF_00104"/>
    </source>
</evidence>
<evidence type="ECO:0000269" key="3">
    <source>
    </source>
</evidence>
<evidence type="ECO:0000305" key="4"/>
<keyword id="KW-0963">Cytoplasm</keyword>
<keyword id="KW-0255">Endonuclease</keyword>
<keyword id="KW-0378">Hydrolase</keyword>
<keyword id="KW-0460">Magnesium</keyword>
<keyword id="KW-0479">Metal-binding</keyword>
<keyword id="KW-0507">mRNA processing</keyword>
<keyword id="KW-0540">Nuclease</keyword>
<keyword id="KW-0694">RNA-binding</keyword>
<keyword id="KW-0698">rRNA processing</keyword>
<keyword id="KW-0699">rRNA-binding</keyword>
<keyword id="KW-0819">tRNA processing</keyword>
<proteinExistence type="inferred from homology"/>
<sequence length="229" mass="25672">MNQLEQKLEQDFGIVFSQKDLLETAFTHTSYANEHRLLNISHNERLEFLGDAALQLVISVYLYNRYPNKPEGEMSKMRSTIVREESLAGFTKACGFEQYIRLGKGEEKSGGRERATILGDLWEAFLGALYLDQGLPAVEKFLNQVMIPQVEKGNFDRVIDYKTALQERLQVNGKVDITYTVIDESGPAHAKEFTMQVAVDGKELSTGFGKSKKLAEQAAAKSALEQLGN</sequence>
<gene>
    <name evidence="2" type="primary">rnc</name>
    <name type="ordered locus">STER_1272</name>
</gene>
<feature type="chain" id="PRO_1000075841" description="Ribonuclease 3">
    <location>
        <begin position="1"/>
        <end position="229"/>
    </location>
</feature>
<feature type="domain" description="RNase III" evidence="2">
    <location>
        <begin position="5"/>
        <end position="134"/>
    </location>
</feature>
<feature type="domain" description="DRBM" evidence="2">
    <location>
        <begin position="160"/>
        <end position="229"/>
    </location>
</feature>
<feature type="active site" evidence="2">
    <location>
        <position position="51"/>
    </location>
</feature>
<feature type="active site" evidence="2">
    <location>
        <position position="123"/>
    </location>
</feature>
<feature type="binding site" evidence="2">
    <location>
        <position position="47"/>
    </location>
    <ligand>
        <name>Mg(2+)</name>
        <dbReference type="ChEBI" id="CHEBI:18420"/>
    </ligand>
</feature>
<feature type="binding site" evidence="2">
    <location>
        <position position="120"/>
    </location>
    <ligand>
        <name>Mg(2+)</name>
        <dbReference type="ChEBI" id="CHEBI:18420"/>
    </ligand>
</feature>
<feature type="binding site" evidence="2">
    <location>
        <position position="123"/>
    </location>
    <ligand>
        <name>Mg(2+)</name>
        <dbReference type="ChEBI" id="CHEBI:18420"/>
    </ligand>
</feature>
<accession>Q03K17</accession>
<protein>
    <recommendedName>
        <fullName evidence="2">Ribonuclease 3</fullName>
        <ecNumber evidence="2">3.1.26.3</ecNumber>
    </recommendedName>
    <alternativeName>
        <fullName evidence="2">Ribonuclease III</fullName>
        <shortName evidence="2">RNase III</shortName>
    </alternativeName>
</protein>
<comment type="function">
    <text evidence="1">Digests double-stranded RNA. Involved in the processing of primary rRNA transcript to yield the immediate precursors to the large and small rRNAs (23S and 16S). Also processes some mRNAs, and tRNAs when they are encoded in the rRNA operon (By similarity).</text>
</comment>
<comment type="function">
    <text evidence="3 4">CRISPR (clustered regularly interspaced short palindromic repeat) is an adaptive immune system that provides protection against mobile genetic elements (viruses, transposable elements and conjugative plasmids). CRISPR clusters contain spacers, sequences complementary to antecedent mobile elements, and target invading nucleic acids. CRISPR clusters are transcribed and processed into CRISPR RNA (crRNA). In this organism endogenous ribonuclease 3 and Cas9 are required for correct coprocessing of pre-crRNA and the trans-encoded small RNA (tracrRNA). Cas9, crRNA and tracrRNA are required for cleavage of invading DNA (Probable). Complements pre-crRNA and tracRNA coprocessing defects in an rnc deletion in S.pyogenes strain 370 (PubMed:24270795).</text>
</comment>
<comment type="catalytic activity">
    <reaction evidence="2">
        <text>Endonucleolytic cleavage to 5'-phosphomonoester.</text>
        <dbReference type="EC" id="3.1.26.3"/>
    </reaction>
</comment>
<comment type="cofactor">
    <cofactor evidence="2">
        <name>Mg(2+)</name>
        <dbReference type="ChEBI" id="CHEBI:18420"/>
    </cofactor>
</comment>
<comment type="subunit">
    <text evidence="2">Homodimer.</text>
</comment>
<comment type="subcellular location">
    <subcellularLocation>
        <location evidence="2">Cytoplasm</location>
    </subcellularLocation>
</comment>
<comment type="similarity">
    <text evidence="2">Belongs to the ribonuclease III family.</text>
</comment>